<organism>
    <name type="scientific">Staphylococcus aureus (strain Mu50 / ATCC 700699)</name>
    <dbReference type="NCBI Taxonomy" id="158878"/>
    <lineage>
        <taxon>Bacteria</taxon>
        <taxon>Bacillati</taxon>
        <taxon>Bacillota</taxon>
        <taxon>Bacilli</taxon>
        <taxon>Bacillales</taxon>
        <taxon>Staphylococcaceae</taxon>
        <taxon>Staphylococcus</taxon>
    </lineage>
</organism>
<name>RL5_STAAM</name>
<dbReference type="EMBL" id="BA000017">
    <property type="protein sequence ID" value="BAB58400.1"/>
    <property type="molecule type" value="Genomic_DNA"/>
</dbReference>
<dbReference type="RefSeq" id="WP_001080824.1">
    <property type="nucleotide sequence ID" value="NC_002758.2"/>
</dbReference>
<dbReference type="SMR" id="Q99S33"/>
<dbReference type="KEGG" id="sav:SAV2238"/>
<dbReference type="HOGENOM" id="CLU_061015_2_1_9"/>
<dbReference type="PhylomeDB" id="Q99S33"/>
<dbReference type="Proteomes" id="UP000002481">
    <property type="component" value="Chromosome"/>
</dbReference>
<dbReference type="GO" id="GO:1990904">
    <property type="term" value="C:ribonucleoprotein complex"/>
    <property type="evidence" value="ECO:0007669"/>
    <property type="project" value="UniProtKB-KW"/>
</dbReference>
<dbReference type="GO" id="GO:0005840">
    <property type="term" value="C:ribosome"/>
    <property type="evidence" value="ECO:0007669"/>
    <property type="project" value="UniProtKB-KW"/>
</dbReference>
<dbReference type="GO" id="GO:0019843">
    <property type="term" value="F:rRNA binding"/>
    <property type="evidence" value="ECO:0007669"/>
    <property type="project" value="UniProtKB-UniRule"/>
</dbReference>
<dbReference type="GO" id="GO:0003735">
    <property type="term" value="F:structural constituent of ribosome"/>
    <property type="evidence" value="ECO:0007669"/>
    <property type="project" value="InterPro"/>
</dbReference>
<dbReference type="GO" id="GO:0000049">
    <property type="term" value="F:tRNA binding"/>
    <property type="evidence" value="ECO:0007669"/>
    <property type="project" value="UniProtKB-UniRule"/>
</dbReference>
<dbReference type="GO" id="GO:0006412">
    <property type="term" value="P:translation"/>
    <property type="evidence" value="ECO:0007669"/>
    <property type="project" value="UniProtKB-UniRule"/>
</dbReference>
<dbReference type="FunFam" id="3.30.1440.10:FF:000001">
    <property type="entry name" value="50S ribosomal protein L5"/>
    <property type="match status" value="1"/>
</dbReference>
<dbReference type="Gene3D" id="3.30.1440.10">
    <property type="match status" value="1"/>
</dbReference>
<dbReference type="HAMAP" id="MF_01333_B">
    <property type="entry name" value="Ribosomal_uL5_B"/>
    <property type="match status" value="1"/>
</dbReference>
<dbReference type="InterPro" id="IPR002132">
    <property type="entry name" value="Ribosomal_uL5"/>
</dbReference>
<dbReference type="InterPro" id="IPR020930">
    <property type="entry name" value="Ribosomal_uL5_bac-type"/>
</dbReference>
<dbReference type="InterPro" id="IPR031309">
    <property type="entry name" value="Ribosomal_uL5_C"/>
</dbReference>
<dbReference type="InterPro" id="IPR020929">
    <property type="entry name" value="Ribosomal_uL5_CS"/>
</dbReference>
<dbReference type="InterPro" id="IPR022803">
    <property type="entry name" value="Ribosomal_uL5_dom_sf"/>
</dbReference>
<dbReference type="InterPro" id="IPR031310">
    <property type="entry name" value="Ribosomal_uL5_N"/>
</dbReference>
<dbReference type="NCBIfam" id="NF000585">
    <property type="entry name" value="PRK00010.1"/>
    <property type="match status" value="1"/>
</dbReference>
<dbReference type="PANTHER" id="PTHR11994">
    <property type="entry name" value="60S RIBOSOMAL PROTEIN L11-RELATED"/>
    <property type="match status" value="1"/>
</dbReference>
<dbReference type="Pfam" id="PF00281">
    <property type="entry name" value="Ribosomal_L5"/>
    <property type="match status" value="1"/>
</dbReference>
<dbReference type="Pfam" id="PF00673">
    <property type="entry name" value="Ribosomal_L5_C"/>
    <property type="match status" value="1"/>
</dbReference>
<dbReference type="PIRSF" id="PIRSF002161">
    <property type="entry name" value="Ribosomal_L5"/>
    <property type="match status" value="1"/>
</dbReference>
<dbReference type="SUPFAM" id="SSF55282">
    <property type="entry name" value="RL5-like"/>
    <property type="match status" value="1"/>
</dbReference>
<dbReference type="PROSITE" id="PS00358">
    <property type="entry name" value="RIBOSOMAL_L5"/>
    <property type="match status" value="1"/>
</dbReference>
<keyword id="KW-0687">Ribonucleoprotein</keyword>
<keyword id="KW-0689">Ribosomal protein</keyword>
<keyword id="KW-0694">RNA-binding</keyword>
<keyword id="KW-0699">rRNA-binding</keyword>
<keyword id="KW-0820">tRNA-binding</keyword>
<proteinExistence type="inferred from homology"/>
<protein>
    <recommendedName>
        <fullName evidence="1">Large ribosomal subunit protein uL5</fullName>
    </recommendedName>
    <alternativeName>
        <fullName evidence="2">50S ribosomal protein L5</fullName>
    </alternativeName>
</protein>
<feature type="chain" id="PRO_0000124987" description="Large ribosomal subunit protein uL5">
    <location>
        <begin position="1"/>
        <end position="179"/>
    </location>
</feature>
<reference key="1">
    <citation type="journal article" date="2001" name="Lancet">
        <title>Whole genome sequencing of meticillin-resistant Staphylococcus aureus.</title>
        <authorList>
            <person name="Kuroda M."/>
            <person name="Ohta T."/>
            <person name="Uchiyama I."/>
            <person name="Baba T."/>
            <person name="Yuzawa H."/>
            <person name="Kobayashi I."/>
            <person name="Cui L."/>
            <person name="Oguchi A."/>
            <person name="Aoki K."/>
            <person name="Nagai Y."/>
            <person name="Lian J.-Q."/>
            <person name="Ito T."/>
            <person name="Kanamori M."/>
            <person name="Matsumaru H."/>
            <person name="Maruyama A."/>
            <person name="Murakami H."/>
            <person name="Hosoyama A."/>
            <person name="Mizutani-Ui Y."/>
            <person name="Takahashi N.K."/>
            <person name="Sawano T."/>
            <person name="Inoue R."/>
            <person name="Kaito C."/>
            <person name="Sekimizu K."/>
            <person name="Hirakawa H."/>
            <person name="Kuhara S."/>
            <person name="Goto S."/>
            <person name="Yabuzaki J."/>
            <person name="Kanehisa M."/>
            <person name="Yamashita A."/>
            <person name="Oshima K."/>
            <person name="Furuya K."/>
            <person name="Yoshino C."/>
            <person name="Shiba T."/>
            <person name="Hattori M."/>
            <person name="Ogasawara N."/>
            <person name="Hayashi H."/>
            <person name="Hiramatsu K."/>
        </authorList>
    </citation>
    <scope>NUCLEOTIDE SEQUENCE [LARGE SCALE GENOMIC DNA]</scope>
    <source>
        <strain>Mu50 / ATCC 700699</strain>
    </source>
</reference>
<evidence type="ECO:0000255" key="1">
    <source>
        <dbReference type="HAMAP-Rule" id="MF_01333"/>
    </source>
</evidence>
<evidence type="ECO:0000305" key="2"/>
<accession>Q99S33</accession>
<comment type="function">
    <text evidence="1">This is one of the proteins that bind and probably mediate the attachment of the 5S RNA into the large ribosomal subunit, where it forms part of the central protuberance. In the 70S ribosome it contacts protein S13 of the 30S subunit (bridge B1b), connecting the 2 subunits; this bridge is implicated in subunit movement. Contacts the P site tRNA; the 5S rRNA and some of its associated proteins might help stabilize positioning of ribosome-bound tRNAs.</text>
</comment>
<comment type="subunit">
    <text evidence="1">Part of the 50S ribosomal subunit; part of the 5S rRNA/L5/L18/L25 subcomplex. Contacts the 5S rRNA and the P site tRNA. Forms a bridge to the 30S subunit in the 70S ribosome.</text>
</comment>
<comment type="similarity">
    <text evidence="1">Belongs to the universal ribosomal protein uL5 family.</text>
</comment>
<gene>
    <name evidence="1" type="primary">rplE</name>
    <name type="ordered locus">SAV2238</name>
</gene>
<sequence>MNRLKEKFNTEVTENLMKKFNYSSVMEVPKIDKIVVNMGVGDAVQNSKVLDNAVEELELITGQKPLVTKAKKSIATFRLREGMPIGAKVTLRGERMYEFLDKLISVSLPRVRDFQGVSKKAFDGRGNYTLGVKEQLIFPEIDYDKVSKVRGMDIVIVTTANTDEEARELLANFGMPFRK</sequence>